<feature type="chain" id="PRO_1000025074" description="UDP-2,3-diacylglucosamine hydrolase">
    <location>
        <begin position="1"/>
        <end position="248"/>
    </location>
</feature>
<feature type="binding site" evidence="1">
    <location>
        <position position="7"/>
    </location>
    <ligand>
        <name>Mn(2+)</name>
        <dbReference type="ChEBI" id="CHEBI:29035"/>
        <label>1</label>
    </ligand>
</feature>
<feature type="binding site" evidence="1">
    <location>
        <position position="9"/>
    </location>
    <ligand>
        <name>Mn(2+)</name>
        <dbReference type="ChEBI" id="CHEBI:29035"/>
        <label>1</label>
    </ligand>
</feature>
<feature type="binding site" evidence="1">
    <location>
        <position position="40"/>
    </location>
    <ligand>
        <name>Mn(2+)</name>
        <dbReference type="ChEBI" id="CHEBI:29035"/>
        <label>1</label>
    </ligand>
</feature>
<feature type="binding site" evidence="1">
    <location>
        <position position="40"/>
    </location>
    <ligand>
        <name>Mn(2+)</name>
        <dbReference type="ChEBI" id="CHEBI:29035"/>
        <label>2</label>
    </ligand>
</feature>
<feature type="binding site" evidence="1">
    <location>
        <begin position="78"/>
        <end position="79"/>
    </location>
    <ligand>
        <name>substrate</name>
    </ligand>
</feature>
<feature type="binding site" evidence="1">
    <location>
        <position position="78"/>
    </location>
    <ligand>
        <name>Mn(2+)</name>
        <dbReference type="ChEBI" id="CHEBI:29035"/>
        <label>2</label>
    </ligand>
</feature>
<feature type="binding site" evidence="1">
    <location>
        <position position="113"/>
    </location>
    <ligand>
        <name>Mn(2+)</name>
        <dbReference type="ChEBI" id="CHEBI:29035"/>
        <label>2</label>
    </ligand>
</feature>
<feature type="binding site" evidence="1">
    <location>
        <position position="121"/>
    </location>
    <ligand>
        <name>substrate</name>
    </ligand>
</feature>
<feature type="binding site" evidence="1">
    <location>
        <position position="159"/>
    </location>
    <ligand>
        <name>substrate</name>
    </ligand>
</feature>
<feature type="binding site" evidence="1">
    <location>
        <position position="163"/>
    </location>
    <ligand>
        <name>substrate</name>
    </ligand>
</feature>
<feature type="binding site" evidence="1">
    <location>
        <position position="166"/>
    </location>
    <ligand>
        <name>substrate</name>
    </ligand>
</feature>
<feature type="binding site" evidence="1">
    <location>
        <position position="194"/>
    </location>
    <ligand>
        <name>Mn(2+)</name>
        <dbReference type="ChEBI" id="CHEBI:29035"/>
        <label>2</label>
    </ligand>
</feature>
<feature type="binding site" evidence="1">
    <location>
        <position position="194"/>
    </location>
    <ligand>
        <name>substrate</name>
    </ligand>
</feature>
<feature type="binding site" evidence="1">
    <location>
        <position position="196"/>
    </location>
    <ligand>
        <name>Mn(2+)</name>
        <dbReference type="ChEBI" id="CHEBI:29035"/>
        <label>1</label>
    </ligand>
</feature>
<evidence type="ECO:0000255" key="1">
    <source>
        <dbReference type="HAMAP-Rule" id="MF_00575"/>
    </source>
</evidence>
<sequence length="248" mass="28165">MILLISDLHLEEERPDITRAFLDLLAGRARSASALYILGDFFEAWIGDDAMTPFQRSICQALRELSDSGTAIFLMHGNRDFMLGKAFCKQAGCTLLKDPSVVQFYGEPVLLMHGDSLCTRDESYMKLRRYLRNPLSLFILRNLPLRTRHKLARKLRSESRAQTRMKANDIVDVTPEEIPRIMQEYGVKTLVHGHTHRPAIHKLQIGDQAAKRIVLGDWDRQGWALQVDENGFALAPFDFAPPLALPHG</sequence>
<name>LPXH_PSEPF</name>
<comment type="function">
    <text evidence="1">Hydrolyzes the pyrophosphate bond of UDP-2,3-diacylglucosamine to yield 2,3-diacylglucosamine 1-phosphate (lipid X) and UMP by catalyzing the attack of water at the alpha-P atom. Involved in the biosynthesis of lipid A, a phosphorylated glycolipid that anchors the lipopolysaccharide to the outer membrane of the cell.</text>
</comment>
<comment type="catalytic activity">
    <reaction evidence="1">
        <text>UDP-2-N,3-O-bis[(3R)-3-hydroxytetradecanoyl]-alpha-D-glucosamine + H2O = 2-N,3-O-bis[(3R)-3-hydroxytetradecanoyl]-alpha-D-glucosaminyl 1-phosphate + UMP + 2 H(+)</text>
        <dbReference type="Rhea" id="RHEA:25213"/>
        <dbReference type="ChEBI" id="CHEBI:15377"/>
        <dbReference type="ChEBI" id="CHEBI:15378"/>
        <dbReference type="ChEBI" id="CHEBI:57865"/>
        <dbReference type="ChEBI" id="CHEBI:57957"/>
        <dbReference type="ChEBI" id="CHEBI:78847"/>
        <dbReference type="EC" id="3.6.1.54"/>
    </reaction>
</comment>
<comment type="cofactor">
    <cofactor evidence="1">
        <name>Mn(2+)</name>
        <dbReference type="ChEBI" id="CHEBI:29035"/>
    </cofactor>
    <text evidence="1">Binds 2 Mn(2+) ions per subunit in a binuclear metal center.</text>
</comment>
<comment type="pathway">
    <text evidence="1">Glycolipid biosynthesis; lipid IV(A) biosynthesis; lipid IV(A) from (3R)-3-hydroxytetradecanoyl-[acyl-carrier-protein] and UDP-N-acetyl-alpha-D-glucosamine: step 4/6.</text>
</comment>
<comment type="subcellular location">
    <subcellularLocation>
        <location evidence="1">Cell inner membrane</location>
        <topology evidence="1">Peripheral membrane protein</topology>
        <orientation evidence="1">Cytoplasmic side</orientation>
    </subcellularLocation>
</comment>
<comment type="similarity">
    <text evidence="1">Belongs to the LpxH family.</text>
</comment>
<organism>
    <name type="scientific">Pseudomonas fluorescens (strain Pf0-1)</name>
    <dbReference type="NCBI Taxonomy" id="205922"/>
    <lineage>
        <taxon>Bacteria</taxon>
        <taxon>Pseudomonadati</taxon>
        <taxon>Pseudomonadota</taxon>
        <taxon>Gammaproteobacteria</taxon>
        <taxon>Pseudomonadales</taxon>
        <taxon>Pseudomonadaceae</taxon>
        <taxon>Pseudomonas</taxon>
    </lineage>
</organism>
<proteinExistence type="inferred from homology"/>
<keyword id="KW-0997">Cell inner membrane</keyword>
<keyword id="KW-1003">Cell membrane</keyword>
<keyword id="KW-0378">Hydrolase</keyword>
<keyword id="KW-0441">Lipid A biosynthesis</keyword>
<keyword id="KW-0444">Lipid biosynthesis</keyword>
<keyword id="KW-0443">Lipid metabolism</keyword>
<keyword id="KW-0464">Manganese</keyword>
<keyword id="KW-0472">Membrane</keyword>
<keyword id="KW-0479">Metal-binding</keyword>
<dbReference type="EC" id="3.6.1.54" evidence="1"/>
<dbReference type="EMBL" id="CP000094">
    <property type="protein sequence ID" value="ABA75379.1"/>
    <property type="molecule type" value="Genomic_DNA"/>
</dbReference>
<dbReference type="RefSeq" id="WP_011334986.1">
    <property type="nucleotide sequence ID" value="NC_007492.2"/>
</dbReference>
<dbReference type="SMR" id="Q3KA25"/>
<dbReference type="KEGG" id="pfo:Pfl01_3641"/>
<dbReference type="eggNOG" id="COG2908">
    <property type="taxonomic scope" value="Bacteria"/>
</dbReference>
<dbReference type="HOGENOM" id="CLU_074586_0_0_6"/>
<dbReference type="UniPathway" id="UPA00359">
    <property type="reaction ID" value="UER00480"/>
</dbReference>
<dbReference type="Proteomes" id="UP000002704">
    <property type="component" value="Chromosome"/>
</dbReference>
<dbReference type="GO" id="GO:0005737">
    <property type="term" value="C:cytoplasm"/>
    <property type="evidence" value="ECO:0007669"/>
    <property type="project" value="InterPro"/>
</dbReference>
<dbReference type="GO" id="GO:0019897">
    <property type="term" value="C:extrinsic component of plasma membrane"/>
    <property type="evidence" value="ECO:0007669"/>
    <property type="project" value="UniProtKB-UniRule"/>
</dbReference>
<dbReference type="GO" id="GO:0030145">
    <property type="term" value="F:manganese ion binding"/>
    <property type="evidence" value="ECO:0007669"/>
    <property type="project" value="UniProtKB-UniRule"/>
</dbReference>
<dbReference type="GO" id="GO:0008758">
    <property type="term" value="F:UDP-2,3-diacylglucosamine hydrolase activity"/>
    <property type="evidence" value="ECO:0007669"/>
    <property type="project" value="UniProtKB-UniRule"/>
</dbReference>
<dbReference type="GO" id="GO:0009245">
    <property type="term" value="P:lipid A biosynthetic process"/>
    <property type="evidence" value="ECO:0007669"/>
    <property type="project" value="UniProtKB-UniRule"/>
</dbReference>
<dbReference type="CDD" id="cd07398">
    <property type="entry name" value="MPP_YbbF-LpxH"/>
    <property type="match status" value="1"/>
</dbReference>
<dbReference type="Gene3D" id="3.60.21.10">
    <property type="match status" value="1"/>
</dbReference>
<dbReference type="HAMAP" id="MF_00575">
    <property type="entry name" value="LpxH"/>
    <property type="match status" value="1"/>
</dbReference>
<dbReference type="InterPro" id="IPR004843">
    <property type="entry name" value="Calcineurin-like_PHP_ApaH"/>
</dbReference>
<dbReference type="InterPro" id="IPR043461">
    <property type="entry name" value="LpxH-like"/>
</dbReference>
<dbReference type="InterPro" id="IPR029052">
    <property type="entry name" value="Metallo-depent_PP-like"/>
</dbReference>
<dbReference type="InterPro" id="IPR010138">
    <property type="entry name" value="UDP-diacylglucosamine_Hdrlase"/>
</dbReference>
<dbReference type="NCBIfam" id="TIGR01854">
    <property type="entry name" value="lipid_A_lpxH"/>
    <property type="match status" value="1"/>
</dbReference>
<dbReference type="NCBIfam" id="NF003743">
    <property type="entry name" value="PRK05340.1"/>
    <property type="match status" value="1"/>
</dbReference>
<dbReference type="PANTHER" id="PTHR34990:SF1">
    <property type="entry name" value="UDP-2,3-DIACYLGLUCOSAMINE HYDROLASE"/>
    <property type="match status" value="1"/>
</dbReference>
<dbReference type="PANTHER" id="PTHR34990">
    <property type="entry name" value="UDP-2,3-DIACYLGLUCOSAMINE HYDROLASE-RELATED"/>
    <property type="match status" value="1"/>
</dbReference>
<dbReference type="Pfam" id="PF00149">
    <property type="entry name" value="Metallophos"/>
    <property type="match status" value="1"/>
</dbReference>
<dbReference type="SUPFAM" id="SSF56300">
    <property type="entry name" value="Metallo-dependent phosphatases"/>
    <property type="match status" value="1"/>
</dbReference>
<reference key="1">
    <citation type="journal article" date="2009" name="Genome Biol.">
        <title>Genomic and genetic analyses of diversity and plant interactions of Pseudomonas fluorescens.</title>
        <authorList>
            <person name="Silby M.W."/>
            <person name="Cerdeno-Tarraga A.M."/>
            <person name="Vernikos G.S."/>
            <person name="Giddens S.R."/>
            <person name="Jackson R.W."/>
            <person name="Preston G.M."/>
            <person name="Zhang X.-X."/>
            <person name="Moon C.D."/>
            <person name="Gehrig S.M."/>
            <person name="Godfrey S.A.C."/>
            <person name="Knight C.G."/>
            <person name="Malone J.G."/>
            <person name="Robinson Z."/>
            <person name="Spiers A.J."/>
            <person name="Harris S."/>
            <person name="Challis G.L."/>
            <person name="Yaxley A.M."/>
            <person name="Harris D."/>
            <person name="Seeger K."/>
            <person name="Murphy L."/>
            <person name="Rutter S."/>
            <person name="Squares R."/>
            <person name="Quail M.A."/>
            <person name="Saunders E."/>
            <person name="Mavromatis K."/>
            <person name="Brettin T.S."/>
            <person name="Bentley S.D."/>
            <person name="Hothersall J."/>
            <person name="Stephens E."/>
            <person name="Thomas C.M."/>
            <person name="Parkhill J."/>
            <person name="Levy S.B."/>
            <person name="Rainey P.B."/>
            <person name="Thomson N.R."/>
        </authorList>
    </citation>
    <scope>NUCLEOTIDE SEQUENCE [LARGE SCALE GENOMIC DNA]</scope>
    <source>
        <strain>Pf0-1</strain>
    </source>
</reference>
<gene>
    <name evidence="1" type="primary">lpxH</name>
    <name type="ordered locus">Pfl01_3641</name>
</gene>
<accession>Q3KA25</accession>
<protein>
    <recommendedName>
        <fullName evidence="1">UDP-2,3-diacylglucosamine hydrolase</fullName>
        <ecNumber evidence="1">3.6.1.54</ecNumber>
    </recommendedName>
    <alternativeName>
        <fullName evidence="1">UDP-2,3-diacylglucosamine diphosphatase</fullName>
    </alternativeName>
</protein>